<reference key="1">
    <citation type="journal article" date="2007" name="PLoS Genet.">
        <title>Patterns and implications of gene gain and loss in the evolution of Prochlorococcus.</title>
        <authorList>
            <person name="Kettler G.C."/>
            <person name="Martiny A.C."/>
            <person name="Huang K."/>
            <person name="Zucker J."/>
            <person name="Coleman M.L."/>
            <person name="Rodrigue S."/>
            <person name="Chen F."/>
            <person name="Lapidus A."/>
            <person name="Ferriera S."/>
            <person name="Johnson J."/>
            <person name="Steglich C."/>
            <person name="Church G.M."/>
            <person name="Richardson P."/>
            <person name="Chisholm S.W."/>
        </authorList>
    </citation>
    <scope>NUCLEOTIDE SEQUENCE [LARGE SCALE GENOMIC DNA]</scope>
    <source>
        <strain>MIT 9211</strain>
    </source>
</reference>
<accession>A9BD81</accession>
<feature type="chain" id="PRO_1000092780" description="Translation initiation factor IF-3">
    <location>
        <begin position="1"/>
        <end position="202"/>
    </location>
</feature>
<sequence length="202" mass="23497">MPPRPRFDRRAPVRELPNINDRIKYPQLRVVDADGTQLGVINREAALEVAQERELDLVLVSEKANPPVCRIMNYGKFKFEQEKKAKEAKKKSHQTEVKEVKMRYKIDQHDYEVRINQATRFLKAGDKVKCTVIFRGREIQHTNLAESLLARMAKDLEEQAEVQQTPKREGRNMIMFLTPRKTPLIKNEKEVTTSAKAERTIS</sequence>
<comment type="function">
    <text evidence="1">IF-3 binds to the 30S ribosomal subunit and shifts the equilibrium between 70S ribosomes and their 50S and 30S subunits in favor of the free subunits, thus enhancing the availability of 30S subunits on which protein synthesis initiation begins.</text>
</comment>
<comment type="subunit">
    <text evidence="1">Monomer.</text>
</comment>
<comment type="subcellular location">
    <subcellularLocation>
        <location evidence="1">Cytoplasm</location>
    </subcellularLocation>
</comment>
<comment type="similarity">
    <text evidence="1">Belongs to the IF-3 family.</text>
</comment>
<evidence type="ECO:0000255" key="1">
    <source>
        <dbReference type="HAMAP-Rule" id="MF_00080"/>
    </source>
</evidence>
<keyword id="KW-0963">Cytoplasm</keyword>
<keyword id="KW-0396">Initiation factor</keyword>
<keyword id="KW-0648">Protein biosynthesis</keyword>
<keyword id="KW-1185">Reference proteome</keyword>
<name>IF3_PROM4</name>
<gene>
    <name evidence="1" type="primary">infC</name>
    <name type="ordered locus">P9211_17631</name>
</gene>
<organism>
    <name type="scientific">Prochlorococcus marinus (strain MIT 9211)</name>
    <dbReference type="NCBI Taxonomy" id="93059"/>
    <lineage>
        <taxon>Bacteria</taxon>
        <taxon>Bacillati</taxon>
        <taxon>Cyanobacteriota</taxon>
        <taxon>Cyanophyceae</taxon>
        <taxon>Synechococcales</taxon>
        <taxon>Prochlorococcaceae</taxon>
        <taxon>Prochlorococcus</taxon>
    </lineage>
</organism>
<protein>
    <recommendedName>
        <fullName evidence="1">Translation initiation factor IF-3</fullName>
    </recommendedName>
</protein>
<proteinExistence type="inferred from homology"/>
<dbReference type="EMBL" id="CP000878">
    <property type="protein sequence ID" value="ABX09694.1"/>
    <property type="molecule type" value="Genomic_DNA"/>
</dbReference>
<dbReference type="RefSeq" id="WP_012196314.1">
    <property type="nucleotide sequence ID" value="NC_009976.1"/>
</dbReference>
<dbReference type="SMR" id="A9BD81"/>
<dbReference type="STRING" id="93059.P9211_17631"/>
<dbReference type="KEGG" id="pmj:P9211_17631"/>
<dbReference type="eggNOG" id="COG0290">
    <property type="taxonomic scope" value="Bacteria"/>
</dbReference>
<dbReference type="HOGENOM" id="CLU_054919_3_2_3"/>
<dbReference type="OrthoDB" id="9806014at2"/>
<dbReference type="Proteomes" id="UP000000788">
    <property type="component" value="Chromosome"/>
</dbReference>
<dbReference type="GO" id="GO:0005829">
    <property type="term" value="C:cytosol"/>
    <property type="evidence" value="ECO:0007669"/>
    <property type="project" value="TreeGrafter"/>
</dbReference>
<dbReference type="GO" id="GO:0016020">
    <property type="term" value="C:membrane"/>
    <property type="evidence" value="ECO:0007669"/>
    <property type="project" value="TreeGrafter"/>
</dbReference>
<dbReference type="GO" id="GO:0043022">
    <property type="term" value="F:ribosome binding"/>
    <property type="evidence" value="ECO:0007669"/>
    <property type="project" value="TreeGrafter"/>
</dbReference>
<dbReference type="GO" id="GO:0003743">
    <property type="term" value="F:translation initiation factor activity"/>
    <property type="evidence" value="ECO:0007669"/>
    <property type="project" value="UniProtKB-UniRule"/>
</dbReference>
<dbReference type="GO" id="GO:0032790">
    <property type="term" value="P:ribosome disassembly"/>
    <property type="evidence" value="ECO:0007669"/>
    <property type="project" value="TreeGrafter"/>
</dbReference>
<dbReference type="FunFam" id="3.10.20.80:FF:000001">
    <property type="entry name" value="Translation initiation factor IF-3"/>
    <property type="match status" value="1"/>
</dbReference>
<dbReference type="FunFam" id="3.30.110.10:FF:000001">
    <property type="entry name" value="Translation initiation factor IF-3"/>
    <property type="match status" value="1"/>
</dbReference>
<dbReference type="Gene3D" id="3.30.110.10">
    <property type="entry name" value="Translation initiation factor 3 (IF-3), C-terminal domain"/>
    <property type="match status" value="1"/>
</dbReference>
<dbReference type="Gene3D" id="3.10.20.80">
    <property type="entry name" value="Translation initiation factor 3 (IF-3), N-terminal domain"/>
    <property type="match status" value="1"/>
</dbReference>
<dbReference type="HAMAP" id="MF_00080">
    <property type="entry name" value="IF_3"/>
    <property type="match status" value="1"/>
</dbReference>
<dbReference type="InterPro" id="IPR036788">
    <property type="entry name" value="T_IF-3_C_sf"/>
</dbReference>
<dbReference type="InterPro" id="IPR036787">
    <property type="entry name" value="T_IF-3_N_sf"/>
</dbReference>
<dbReference type="InterPro" id="IPR019813">
    <property type="entry name" value="Translation_initiation_fac3_CS"/>
</dbReference>
<dbReference type="InterPro" id="IPR001288">
    <property type="entry name" value="Translation_initiation_fac_3"/>
</dbReference>
<dbReference type="InterPro" id="IPR019815">
    <property type="entry name" value="Translation_initiation_fac_3_C"/>
</dbReference>
<dbReference type="InterPro" id="IPR019814">
    <property type="entry name" value="Translation_initiation_fac_3_N"/>
</dbReference>
<dbReference type="NCBIfam" id="TIGR00168">
    <property type="entry name" value="infC"/>
    <property type="match status" value="1"/>
</dbReference>
<dbReference type="PANTHER" id="PTHR10938">
    <property type="entry name" value="TRANSLATION INITIATION FACTOR IF-3"/>
    <property type="match status" value="1"/>
</dbReference>
<dbReference type="PANTHER" id="PTHR10938:SF0">
    <property type="entry name" value="TRANSLATION INITIATION FACTOR IF-3, MITOCHONDRIAL"/>
    <property type="match status" value="1"/>
</dbReference>
<dbReference type="Pfam" id="PF00707">
    <property type="entry name" value="IF3_C"/>
    <property type="match status" value="1"/>
</dbReference>
<dbReference type="Pfam" id="PF05198">
    <property type="entry name" value="IF3_N"/>
    <property type="match status" value="1"/>
</dbReference>
<dbReference type="SUPFAM" id="SSF55200">
    <property type="entry name" value="Translation initiation factor IF3, C-terminal domain"/>
    <property type="match status" value="1"/>
</dbReference>
<dbReference type="SUPFAM" id="SSF54364">
    <property type="entry name" value="Translation initiation factor IF3, N-terminal domain"/>
    <property type="match status" value="1"/>
</dbReference>
<dbReference type="PROSITE" id="PS00938">
    <property type="entry name" value="IF3"/>
    <property type="match status" value="1"/>
</dbReference>